<keyword id="KW-0238">DNA-binding</keyword>
<keyword id="KW-0479">Metal-binding</keyword>
<keyword id="KW-0539">Nucleus</keyword>
<keyword id="KW-1185">Reference proteome</keyword>
<keyword id="KW-0677">Repeat</keyword>
<keyword id="KW-0804">Transcription</keyword>
<keyword id="KW-0805">Transcription regulation</keyword>
<keyword id="KW-0862">Zinc</keyword>
<keyword id="KW-0863">Zinc-finger</keyword>
<organism>
    <name type="scientific">Danio rerio</name>
    <name type="common">Zebrafish</name>
    <name type="synonym">Brachydanio rerio</name>
    <dbReference type="NCBI Taxonomy" id="7955"/>
    <lineage>
        <taxon>Eukaryota</taxon>
        <taxon>Metazoa</taxon>
        <taxon>Chordata</taxon>
        <taxon>Craniata</taxon>
        <taxon>Vertebrata</taxon>
        <taxon>Euteleostomi</taxon>
        <taxon>Actinopterygii</taxon>
        <taxon>Neopterygii</taxon>
        <taxon>Teleostei</taxon>
        <taxon>Ostariophysi</taxon>
        <taxon>Cypriniformes</taxon>
        <taxon>Danionidae</taxon>
        <taxon>Danioninae</taxon>
        <taxon>Danio</taxon>
    </lineage>
</organism>
<accession>F6NSX9</accession>
<comment type="function">
    <text evidence="5">May be involved in transcriptional regulation.</text>
</comment>
<comment type="subcellular location">
    <subcellularLocation>
        <location evidence="1">Nucleus</location>
    </subcellularLocation>
</comment>
<comment type="tissue specificity">
    <text evidence="4">Widely expressed with highest levels in eye, spleen and ovary.</text>
</comment>
<comment type="developmental stage">
    <text evidence="4">Highly expressed in the initial stages of development (4-cell up to 1k-2k cell stages). Up-regulated during regeneration of the caudal fin after amputation.</text>
</comment>
<comment type="similarity">
    <text evidence="5">Belongs to the krueppel C2H2-type zinc-finger protein family.</text>
</comment>
<proteinExistence type="evidence at transcript level"/>
<sequence>MGDMKTPDFDDLLAAFDIPDIDAKEAIQSAPDEVEGHQGAGGASLIKSGDASVGESSALRSPSPSTDSQSDPSIVSVIVKNRVRPEPFDGGENSVPDPLNHNGFVSSGGSVHMSQSRGQPNGEQWPVCSSKAIPETAGQHGSSGGSKQGSNIFNKLKPLMAQGAGDSVGRARKMQLLQQQHMQQEMNLEGADKAKAPANPSGASGAASPFFPPPKPLLSTPSTASSSSPSSSSPSVGSRVSGAVASSPLATSLTEPFNGTPRLSSSAFRRADSEEEDSDPDSGGSLVIHESPDSPTPPKLSRRLRSSPENSQSPSIPPSTSISPNAYPKPGDVPSASPASPRAQQNWLSTAAQTGNGKSLPQEERNPEHVIEERDSPESPEPEMPKSSMPTSAVTKRSCSPAAASSPSAALREPKEEDEEMEVDKASTENGQDAENTDGGKGDTDKIEVDPAQSLEAETGSSTNSDGKAATGGKAPSRPLKVRIKTIKTSTGGITRTVTRVAGKGGAAANAGKDANKGQTGGRAGPVKGGKKNDTTAGQGVKCSTLPVSTLEASSAMLAAASKVQNKMTMQSDKTKVSATAVSITKATTLPVAPAVGGISVRPTVGKTTNGGTMPCKPASIVNSTGAVISRSQSSLVEAFNKILNSKNLLPSYRPDLSTPPPPEWGLPMPAAGYRCLECGDSFALERSLARHYDRRSLRIEVTCNHCAKRLAFFNKCSLLLHAREHKERGLVMQCSHLVMRPVTVEQMIGQQDTTPIGMLSPSLSSPPLTSSTTPAGTIPAPSTSSPLKDSPSPGTASTQPSPARRGPQSPQALMPLPCKKGEALQYHNFKCPECQAQFLSKAELVTHFQQIRATPNSTCTLCSPPMMLPNWCSVSAHQRIHKHRAPHVCPECGGTARQATFQTHLEESCLHFARRIGYRCSSCQVVFGGLNSIKSHIQTAHCEVFHKCPNCPMAFKSAQSAQGHITSQHPALTAAQAKMIYKCVMCDTVFTQKPLLYMHFDTHLAKQKVHVFKCPDCTKLYAQKGSMMEHIKTAHRGLSVKAETPPTTSSPVSAPAGNSTSKPKPATENNSDELSQGPGEEEEEGEDEEGEQEGEEREDEEEEENEEEEQVSSPESGNMEWRCKECKKRFPEREDYIDHMKNEHGTVGNEEISLQIVRAFIQFSQQSSSACPNNTRGRQESLPLPVSRTLLNCKSGLKINKGSWHCSEGKRTFSSRLILEKHIRVRHGIRSRQTTDRTNAPNTRKRSLPADGAGSSSELDNESGAPPAGGGTDTDDVPGEDTSGPAKRTRASENRPVEQEEEDGTFRCTPCGFTTQDWEEFQRHIPVHCDAENAPQQCLQCGACFASAGSLSRHKFITHRLRQGQHDRNASPGASPQYGSPSSPKAGEDGDGGVSCRVCGRRFDKASDLNTHFRTHGMAFITAHRTDKPL</sequence>
<evidence type="ECO:0000250" key="1">
    <source>
        <dbReference type="UniProtKB" id="Q8N1G0"/>
    </source>
</evidence>
<evidence type="ECO:0000255" key="2">
    <source>
        <dbReference type="PROSITE-ProRule" id="PRU00042"/>
    </source>
</evidence>
<evidence type="ECO:0000256" key="3">
    <source>
        <dbReference type="SAM" id="MobiDB-lite"/>
    </source>
</evidence>
<evidence type="ECO:0000269" key="4">
    <source>
    </source>
</evidence>
<evidence type="ECO:0000305" key="5"/>
<name>Z687B_DANRE</name>
<feature type="chain" id="PRO_0000437167" description="Zinc finger protein 687b">
    <location>
        <begin position="1"/>
        <end position="1431"/>
    </location>
</feature>
<feature type="zinc finger region" description="C2H2-type 1; degenerate" evidence="2">
    <location>
        <begin position="674"/>
        <end position="692"/>
    </location>
</feature>
<feature type="zinc finger region" description="C2H2-type 2; degenerate" evidence="2">
    <location>
        <begin position="830"/>
        <end position="853"/>
    </location>
</feature>
<feature type="zinc finger region" description="C2H2-type 3" evidence="2">
    <location>
        <begin position="919"/>
        <end position="942"/>
    </location>
</feature>
<feature type="zinc finger region" description="C2H2-type 4" evidence="2">
    <location>
        <begin position="947"/>
        <end position="970"/>
    </location>
</feature>
<feature type="zinc finger region" description="C2H2-type 5" evidence="2">
    <location>
        <begin position="982"/>
        <end position="1004"/>
    </location>
</feature>
<feature type="zinc finger region" description="C2H2-type 6" evidence="2">
    <location>
        <begin position="1013"/>
        <end position="1036"/>
    </location>
</feature>
<feature type="zinc finger region" description="C2H2-type 7" evidence="2">
    <location>
        <begin position="1122"/>
        <end position="1145"/>
    </location>
</feature>
<feature type="zinc finger region" description="C2H2-type 8; degenerate" evidence="2">
    <location>
        <begin position="1205"/>
        <end position="1227"/>
    </location>
</feature>
<feature type="zinc finger region" description="C2H2-type 9" evidence="2">
    <location>
        <begin position="1307"/>
        <end position="1329"/>
    </location>
</feature>
<feature type="zinc finger region" description="C2H2-type 10" evidence="2">
    <location>
        <begin position="1337"/>
        <end position="1360"/>
    </location>
</feature>
<feature type="zinc finger region" description="C2H2-type 11" evidence="2">
    <location>
        <begin position="1395"/>
        <end position="1425"/>
    </location>
</feature>
<feature type="region of interest" description="Disordered" evidence="3">
    <location>
        <begin position="24"/>
        <end position="481"/>
    </location>
</feature>
<feature type="region of interest" description="Disordered" evidence="3">
    <location>
        <begin position="504"/>
        <end position="538"/>
    </location>
</feature>
<feature type="region of interest" description="Disordered" evidence="3">
    <location>
        <begin position="754"/>
        <end position="816"/>
    </location>
</feature>
<feature type="region of interest" description="Disordered" evidence="3">
    <location>
        <begin position="1041"/>
        <end position="1120"/>
    </location>
</feature>
<feature type="region of interest" description="Disordered" evidence="3">
    <location>
        <begin position="1225"/>
        <end position="1310"/>
    </location>
</feature>
<feature type="region of interest" description="Disordered" evidence="3">
    <location>
        <begin position="1362"/>
        <end position="1392"/>
    </location>
</feature>
<feature type="compositionally biased region" description="Low complexity" evidence="3">
    <location>
        <begin position="61"/>
        <end position="73"/>
    </location>
</feature>
<feature type="compositionally biased region" description="Polar residues" evidence="3">
    <location>
        <begin position="103"/>
        <end position="122"/>
    </location>
</feature>
<feature type="compositionally biased region" description="Low complexity" evidence="3">
    <location>
        <begin position="174"/>
        <end position="188"/>
    </location>
</feature>
<feature type="compositionally biased region" description="Low complexity" evidence="3">
    <location>
        <begin position="196"/>
        <end position="209"/>
    </location>
</feature>
<feature type="compositionally biased region" description="Low complexity" evidence="3">
    <location>
        <begin position="217"/>
        <end position="248"/>
    </location>
</feature>
<feature type="compositionally biased region" description="Polar residues" evidence="3">
    <location>
        <begin position="249"/>
        <end position="267"/>
    </location>
</feature>
<feature type="compositionally biased region" description="Low complexity" evidence="3">
    <location>
        <begin position="311"/>
        <end position="324"/>
    </location>
</feature>
<feature type="compositionally biased region" description="Polar residues" evidence="3">
    <location>
        <begin position="342"/>
        <end position="359"/>
    </location>
</feature>
<feature type="compositionally biased region" description="Basic and acidic residues" evidence="3">
    <location>
        <begin position="361"/>
        <end position="377"/>
    </location>
</feature>
<feature type="compositionally biased region" description="Low complexity" evidence="3">
    <location>
        <begin position="385"/>
        <end position="410"/>
    </location>
</feature>
<feature type="compositionally biased region" description="Basic and acidic residues" evidence="3">
    <location>
        <begin position="438"/>
        <end position="449"/>
    </location>
</feature>
<feature type="compositionally biased region" description="Gly residues" evidence="3">
    <location>
        <begin position="519"/>
        <end position="528"/>
    </location>
</feature>
<feature type="compositionally biased region" description="Low complexity" evidence="3">
    <location>
        <begin position="760"/>
        <end position="775"/>
    </location>
</feature>
<feature type="compositionally biased region" description="Polar residues" evidence="3">
    <location>
        <begin position="781"/>
        <end position="802"/>
    </location>
</feature>
<feature type="compositionally biased region" description="Low complexity" evidence="3">
    <location>
        <begin position="1043"/>
        <end position="1057"/>
    </location>
</feature>
<feature type="compositionally biased region" description="Polar residues" evidence="3">
    <location>
        <begin position="1058"/>
        <end position="1075"/>
    </location>
</feature>
<feature type="compositionally biased region" description="Acidic residues" evidence="3">
    <location>
        <begin position="1080"/>
        <end position="1111"/>
    </location>
</feature>
<feature type="compositionally biased region" description="Polar residues" evidence="3">
    <location>
        <begin position="1373"/>
        <end position="1384"/>
    </location>
</feature>
<dbReference type="EMBL" id="CR628394">
    <property type="status" value="NOT_ANNOTATED_CDS"/>
    <property type="molecule type" value="Genomic_DNA"/>
</dbReference>
<dbReference type="FunCoup" id="F6NSX9">
    <property type="interactions" value="1077"/>
</dbReference>
<dbReference type="STRING" id="7955.ENSDARP00000123366"/>
<dbReference type="PaxDb" id="7955-ENSDARP00000123366"/>
<dbReference type="Ensembl" id="ENSDART00000132336">
    <property type="protein sequence ID" value="ENSDARP00000123366"/>
    <property type="gene ID" value="ENSDARG00000019299"/>
</dbReference>
<dbReference type="eggNOG" id="KOG1721">
    <property type="taxonomic scope" value="Eukaryota"/>
</dbReference>
<dbReference type="InParanoid" id="F6NSX9"/>
<dbReference type="OMA" id="CKTRYSE"/>
<dbReference type="PhylomeDB" id="F6NSX9"/>
<dbReference type="Proteomes" id="UP000000437">
    <property type="component" value="Unplaced"/>
</dbReference>
<dbReference type="Bgee" id="ENSDARG00000019299">
    <property type="expression patterns" value="Expressed in mature ovarian follicle and 22 other cell types or tissues"/>
</dbReference>
<dbReference type="ExpressionAtlas" id="F6NSX9">
    <property type="expression patterns" value="baseline"/>
</dbReference>
<dbReference type="GO" id="GO:0005634">
    <property type="term" value="C:nucleus"/>
    <property type="evidence" value="ECO:0007669"/>
    <property type="project" value="UniProtKB-SubCell"/>
</dbReference>
<dbReference type="GO" id="GO:0003677">
    <property type="term" value="F:DNA binding"/>
    <property type="evidence" value="ECO:0007669"/>
    <property type="project" value="UniProtKB-KW"/>
</dbReference>
<dbReference type="GO" id="GO:0008270">
    <property type="term" value="F:zinc ion binding"/>
    <property type="evidence" value="ECO:0007669"/>
    <property type="project" value="UniProtKB-KW"/>
</dbReference>
<dbReference type="Gene3D" id="3.30.160.60">
    <property type="entry name" value="Classic Zinc Finger"/>
    <property type="match status" value="6"/>
</dbReference>
<dbReference type="InterPro" id="IPR045914">
    <property type="entry name" value="Zn532-like"/>
</dbReference>
<dbReference type="InterPro" id="IPR041697">
    <property type="entry name" value="Znf-C2H2_11"/>
</dbReference>
<dbReference type="InterPro" id="IPR036236">
    <property type="entry name" value="Znf_C2H2_sf"/>
</dbReference>
<dbReference type="InterPro" id="IPR013087">
    <property type="entry name" value="Znf_C2H2_type"/>
</dbReference>
<dbReference type="PANTHER" id="PTHR47222">
    <property type="entry name" value="ZINC FINGER PROTEIN 532-RELATED"/>
    <property type="match status" value="1"/>
</dbReference>
<dbReference type="PANTHER" id="PTHR47222:SF2">
    <property type="entry name" value="ZINC FINGER PROTEIN 687"/>
    <property type="match status" value="1"/>
</dbReference>
<dbReference type="Pfam" id="PF00096">
    <property type="entry name" value="zf-C2H2"/>
    <property type="match status" value="2"/>
</dbReference>
<dbReference type="Pfam" id="PF16622">
    <property type="entry name" value="zf-C2H2_11"/>
    <property type="match status" value="1"/>
</dbReference>
<dbReference type="Pfam" id="PF25412">
    <property type="entry name" value="zf-C2H2_ZNF592"/>
    <property type="match status" value="1"/>
</dbReference>
<dbReference type="SMART" id="SM00355">
    <property type="entry name" value="ZnF_C2H2"/>
    <property type="match status" value="14"/>
</dbReference>
<dbReference type="SUPFAM" id="SSF57667">
    <property type="entry name" value="beta-beta-alpha zinc fingers"/>
    <property type="match status" value="3"/>
</dbReference>
<dbReference type="PROSITE" id="PS00028">
    <property type="entry name" value="ZINC_FINGER_C2H2_1"/>
    <property type="match status" value="7"/>
</dbReference>
<dbReference type="PROSITE" id="PS50157">
    <property type="entry name" value="ZINC_FINGER_C2H2_2"/>
    <property type="match status" value="6"/>
</dbReference>
<reference key="1">
    <citation type="journal article" date="2013" name="Nature">
        <title>The zebrafish reference genome sequence and its relationship to the human genome.</title>
        <authorList>
            <person name="Howe K."/>
            <person name="Clark M.D."/>
            <person name="Torroja C.F."/>
            <person name="Torrance J."/>
            <person name="Berthelot C."/>
            <person name="Muffato M."/>
            <person name="Collins J.E."/>
            <person name="Humphray S."/>
            <person name="McLaren K."/>
            <person name="Matthews L."/>
            <person name="McLaren S."/>
            <person name="Sealy I."/>
            <person name="Caccamo M."/>
            <person name="Churcher C."/>
            <person name="Scott C."/>
            <person name="Barrett J.C."/>
            <person name="Koch R."/>
            <person name="Rauch G.J."/>
            <person name="White S."/>
            <person name="Chow W."/>
            <person name="Kilian B."/>
            <person name="Quintais L.T."/>
            <person name="Guerra-Assuncao J.A."/>
            <person name="Zhou Y."/>
            <person name="Gu Y."/>
            <person name="Yen J."/>
            <person name="Vogel J.H."/>
            <person name="Eyre T."/>
            <person name="Redmond S."/>
            <person name="Banerjee R."/>
            <person name="Chi J."/>
            <person name="Fu B."/>
            <person name="Langley E."/>
            <person name="Maguire S.F."/>
            <person name="Laird G.K."/>
            <person name="Lloyd D."/>
            <person name="Kenyon E."/>
            <person name="Donaldson S."/>
            <person name="Sehra H."/>
            <person name="Almeida-King J."/>
            <person name="Loveland J."/>
            <person name="Trevanion S."/>
            <person name="Jones M."/>
            <person name="Quail M."/>
            <person name="Willey D."/>
            <person name="Hunt A."/>
            <person name="Burton J."/>
            <person name="Sims S."/>
            <person name="McLay K."/>
            <person name="Plumb B."/>
            <person name="Davis J."/>
            <person name="Clee C."/>
            <person name="Oliver K."/>
            <person name="Clark R."/>
            <person name="Riddle C."/>
            <person name="Elliot D."/>
            <person name="Threadgold G."/>
            <person name="Harden G."/>
            <person name="Ware D."/>
            <person name="Begum S."/>
            <person name="Mortimore B."/>
            <person name="Kerry G."/>
            <person name="Heath P."/>
            <person name="Phillimore B."/>
            <person name="Tracey A."/>
            <person name="Corby N."/>
            <person name="Dunn M."/>
            <person name="Johnson C."/>
            <person name="Wood J."/>
            <person name="Clark S."/>
            <person name="Pelan S."/>
            <person name="Griffiths G."/>
            <person name="Smith M."/>
            <person name="Glithero R."/>
            <person name="Howden P."/>
            <person name="Barker N."/>
            <person name="Lloyd C."/>
            <person name="Stevens C."/>
            <person name="Harley J."/>
            <person name="Holt K."/>
            <person name="Panagiotidis G."/>
            <person name="Lovell J."/>
            <person name="Beasley H."/>
            <person name="Henderson C."/>
            <person name="Gordon D."/>
            <person name="Auger K."/>
            <person name="Wright D."/>
            <person name="Collins J."/>
            <person name="Raisen C."/>
            <person name="Dyer L."/>
            <person name="Leung K."/>
            <person name="Robertson L."/>
            <person name="Ambridge K."/>
            <person name="Leongamornlert D."/>
            <person name="McGuire S."/>
            <person name="Gilderthorp R."/>
            <person name="Griffiths C."/>
            <person name="Manthravadi D."/>
            <person name="Nichol S."/>
            <person name="Barker G."/>
            <person name="Whitehead S."/>
            <person name="Kay M."/>
            <person name="Brown J."/>
            <person name="Murnane C."/>
            <person name="Gray E."/>
            <person name="Humphries M."/>
            <person name="Sycamore N."/>
            <person name="Barker D."/>
            <person name="Saunders D."/>
            <person name="Wallis J."/>
            <person name="Babbage A."/>
            <person name="Hammond S."/>
            <person name="Mashreghi-Mohammadi M."/>
            <person name="Barr L."/>
            <person name="Martin S."/>
            <person name="Wray P."/>
            <person name="Ellington A."/>
            <person name="Matthews N."/>
            <person name="Ellwood M."/>
            <person name="Woodmansey R."/>
            <person name="Clark G."/>
            <person name="Cooper J."/>
            <person name="Tromans A."/>
            <person name="Grafham D."/>
            <person name="Skuce C."/>
            <person name="Pandian R."/>
            <person name="Andrews R."/>
            <person name="Harrison E."/>
            <person name="Kimberley A."/>
            <person name="Garnett J."/>
            <person name="Fosker N."/>
            <person name="Hall R."/>
            <person name="Garner P."/>
            <person name="Kelly D."/>
            <person name="Bird C."/>
            <person name="Palmer S."/>
            <person name="Gehring I."/>
            <person name="Berger A."/>
            <person name="Dooley C.M."/>
            <person name="Ersan-Urun Z."/>
            <person name="Eser C."/>
            <person name="Geiger H."/>
            <person name="Geisler M."/>
            <person name="Karotki L."/>
            <person name="Kirn A."/>
            <person name="Konantz J."/>
            <person name="Konantz M."/>
            <person name="Oberlander M."/>
            <person name="Rudolph-Geiger S."/>
            <person name="Teucke M."/>
            <person name="Lanz C."/>
            <person name="Raddatz G."/>
            <person name="Osoegawa K."/>
            <person name="Zhu B."/>
            <person name="Rapp A."/>
            <person name="Widaa S."/>
            <person name="Langford C."/>
            <person name="Yang F."/>
            <person name="Schuster S.C."/>
            <person name="Carter N.P."/>
            <person name="Harrow J."/>
            <person name="Ning Z."/>
            <person name="Herrero J."/>
            <person name="Searle S.M."/>
            <person name="Enright A."/>
            <person name="Geisler R."/>
            <person name="Plasterk R.H."/>
            <person name="Lee C."/>
            <person name="Westerfield M."/>
            <person name="de Jong P.J."/>
            <person name="Zon L.I."/>
            <person name="Postlethwait J.H."/>
            <person name="Nusslein-Volhard C."/>
            <person name="Hubbard T.J."/>
            <person name="Roest Crollius H."/>
            <person name="Rogers J."/>
            <person name="Stemple D.L."/>
        </authorList>
    </citation>
    <scope>NUCLEOTIDE SEQUENCE [LARGE SCALE GENOMIC DNA]</scope>
    <source>
        <strain>Tuebingen</strain>
    </source>
</reference>
<reference key="2">
    <citation type="journal article" date="2016" name="Am. J. Hum. Genet.">
        <title>ZNF687 mutations in severe paget disease of bone associated with giant cell tumor.</title>
        <authorList>
            <person name="Divisato G."/>
            <person name="Formicola D."/>
            <person name="Esposito T."/>
            <person name="Merlotti D."/>
            <person name="Pazzaglia L."/>
            <person name="Del Fattore A."/>
            <person name="Siris E."/>
            <person name="Orcel P."/>
            <person name="Brown J.P."/>
            <person name="Nuti R."/>
            <person name="Strazzullo P."/>
            <person name="Benassi M.S."/>
            <person name="Cancela M.L."/>
            <person name="Michou L."/>
            <person name="Rendina D."/>
            <person name="Gennari L."/>
            <person name="Gianfrancesco F."/>
        </authorList>
    </citation>
    <scope>TISSUE SPECIFICITY</scope>
    <scope>DEVELOPMENTAL STAGE</scope>
</reference>
<gene>
    <name type="primary">znf687b</name>
    <name type="ORF">si:dkey-204a24.9</name>
</gene>
<protein>
    <recommendedName>
        <fullName>Zinc finger protein 687b</fullName>
    </recommendedName>
</protein>